<sequence>MVRLEKNDPLMLARQLPIKSVALILAGGRGTRLKDLTIKRAKPAVHFGGKFRIIDFALSNCINSGIRRIGVITQYQSHTLVQHIQRGWSFFSEEMNEFVDLLPAQQRVHGENWYRGTADAVTQNLDIISRYKAEYVVILAGDHIYKQDYSRMLIDHVEKGARCTVACMPVPIEEASAFGVMAVDENEKIIEFVEKPANPPAMPTDPTKSLASMGIYVFDAAYLYELLEEDDRNENSSHDFGKDIIPKITEAGMAYAHPFPLSCVQSDPNAEPYWRDVGTLEAYWKANLDLASVTPELDMYDQNWPIRTHMESLPPAKFVQDRSGSHGMTLNSLVSGGCIISGSVVVQSVLFPRVRVNSFCNIDSAVLLPDVWVGRSCRLRRCVIDRACVIPEGMVIGENAEEDARRFYRSEEGIVLVTRDMLRKLGHKQER</sequence>
<organism>
    <name type="scientific">Klebsiella pneumoniae subsp. pneumoniae (strain ATCC 700721 / MGH 78578)</name>
    <dbReference type="NCBI Taxonomy" id="272620"/>
    <lineage>
        <taxon>Bacteria</taxon>
        <taxon>Pseudomonadati</taxon>
        <taxon>Pseudomonadota</taxon>
        <taxon>Gammaproteobacteria</taxon>
        <taxon>Enterobacterales</taxon>
        <taxon>Enterobacteriaceae</taxon>
        <taxon>Klebsiella/Raoultella group</taxon>
        <taxon>Klebsiella</taxon>
        <taxon>Klebsiella pneumoniae complex</taxon>
    </lineage>
</organism>
<dbReference type="EC" id="2.7.7.27" evidence="1"/>
<dbReference type="EMBL" id="CP000647">
    <property type="protein sequence ID" value="ABR79183.1"/>
    <property type="molecule type" value="Genomic_DNA"/>
</dbReference>
<dbReference type="RefSeq" id="WP_002920566.1">
    <property type="nucleotide sequence ID" value="NC_009648.1"/>
</dbReference>
<dbReference type="SMR" id="A6TF49"/>
<dbReference type="STRING" id="272620.KPN_03796"/>
<dbReference type="jPOST" id="A6TF49"/>
<dbReference type="PaxDb" id="272620-KPN_03796"/>
<dbReference type="EnsemblBacteria" id="ABR79183">
    <property type="protein sequence ID" value="ABR79183"/>
    <property type="gene ID" value="KPN_03796"/>
</dbReference>
<dbReference type="GeneID" id="93251123"/>
<dbReference type="KEGG" id="kpn:KPN_03796"/>
<dbReference type="HOGENOM" id="CLU_029499_14_1_6"/>
<dbReference type="UniPathway" id="UPA00164"/>
<dbReference type="Proteomes" id="UP000000265">
    <property type="component" value="Chromosome"/>
</dbReference>
<dbReference type="GO" id="GO:0005524">
    <property type="term" value="F:ATP binding"/>
    <property type="evidence" value="ECO:0007669"/>
    <property type="project" value="UniProtKB-KW"/>
</dbReference>
<dbReference type="GO" id="GO:0008878">
    <property type="term" value="F:glucose-1-phosphate adenylyltransferase activity"/>
    <property type="evidence" value="ECO:0007669"/>
    <property type="project" value="UniProtKB-UniRule"/>
</dbReference>
<dbReference type="GO" id="GO:0005978">
    <property type="term" value="P:glycogen biosynthetic process"/>
    <property type="evidence" value="ECO:0007669"/>
    <property type="project" value="UniProtKB-UniRule"/>
</dbReference>
<dbReference type="CDD" id="cd02508">
    <property type="entry name" value="ADP_Glucose_PP"/>
    <property type="match status" value="1"/>
</dbReference>
<dbReference type="CDD" id="cd04651">
    <property type="entry name" value="LbH_G1P_AT_C"/>
    <property type="match status" value="1"/>
</dbReference>
<dbReference type="FunFam" id="2.160.10.10:FF:000006">
    <property type="entry name" value="Glucose-1-phosphate adenylyltransferase"/>
    <property type="match status" value="1"/>
</dbReference>
<dbReference type="FunFam" id="3.90.550.10:FF:000014">
    <property type="entry name" value="Glucose-1-phosphate adenylyltransferase"/>
    <property type="match status" value="1"/>
</dbReference>
<dbReference type="Gene3D" id="2.160.10.10">
    <property type="entry name" value="Hexapeptide repeat proteins"/>
    <property type="match status" value="1"/>
</dbReference>
<dbReference type="Gene3D" id="3.90.550.10">
    <property type="entry name" value="Spore Coat Polysaccharide Biosynthesis Protein SpsA, Chain A"/>
    <property type="match status" value="1"/>
</dbReference>
<dbReference type="HAMAP" id="MF_00624">
    <property type="entry name" value="GlgC"/>
    <property type="match status" value="1"/>
</dbReference>
<dbReference type="InterPro" id="IPR011831">
    <property type="entry name" value="ADP-Glc_PPase"/>
</dbReference>
<dbReference type="InterPro" id="IPR005836">
    <property type="entry name" value="ADP_Glu_pyroP_CS"/>
</dbReference>
<dbReference type="InterPro" id="IPR023049">
    <property type="entry name" value="GlgC_bac"/>
</dbReference>
<dbReference type="InterPro" id="IPR056818">
    <property type="entry name" value="GlmU/GlgC-like_hexapep"/>
</dbReference>
<dbReference type="InterPro" id="IPR005835">
    <property type="entry name" value="NTP_transferase_dom"/>
</dbReference>
<dbReference type="InterPro" id="IPR029044">
    <property type="entry name" value="Nucleotide-diphossugar_trans"/>
</dbReference>
<dbReference type="InterPro" id="IPR011004">
    <property type="entry name" value="Trimer_LpxA-like_sf"/>
</dbReference>
<dbReference type="NCBIfam" id="TIGR02091">
    <property type="entry name" value="glgC"/>
    <property type="match status" value="1"/>
</dbReference>
<dbReference type="NCBIfam" id="NF001947">
    <property type="entry name" value="PRK00725.1"/>
    <property type="match status" value="1"/>
</dbReference>
<dbReference type="NCBIfam" id="NF002023">
    <property type="entry name" value="PRK00844.1"/>
    <property type="match status" value="1"/>
</dbReference>
<dbReference type="PANTHER" id="PTHR43523:SF2">
    <property type="entry name" value="GLUCOSE-1-PHOSPHATE ADENYLYLTRANSFERASE"/>
    <property type="match status" value="1"/>
</dbReference>
<dbReference type="PANTHER" id="PTHR43523">
    <property type="entry name" value="GLUCOSE-1-PHOSPHATE ADENYLYLTRANSFERASE-RELATED"/>
    <property type="match status" value="1"/>
</dbReference>
<dbReference type="Pfam" id="PF24894">
    <property type="entry name" value="Hexapep_GlmU"/>
    <property type="match status" value="1"/>
</dbReference>
<dbReference type="Pfam" id="PF00483">
    <property type="entry name" value="NTP_transferase"/>
    <property type="match status" value="1"/>
</dbReference>
<dbReference type="SUPFAM" id="SSF53448">
    <property type="entry name" value="Nucleotide-diphospho-sugar transferases"/>
    <property type="match status" value="1"/>
</dbReference>
<dbReference type="SUPFAM" id="SSF51161">
    <property type="entry name" value="Trimeric LpxA-like enzymes"/>
    <property type="match status" value="1"/>
</dbReference>
<dbReference type="PROSITE" id="PS00808">
    <property type="entry name" value="ADP_GLC_PYROPHOSPH_1"/>
    <property type="match status" value="1"/>
</dbReference>
<dbReference type="PROSITE" id="PS00809">
    <property type="entry name" value="ADP_GLC_PYROPHOSPH_2"/>
    <property type="match status" value="1"/>
</dbReference>
<proteinExistence type="inferred from homology"/>
<evidence type="ECO:0000255" key="1">
    <source>
        <dbReference type="HAMAP-Rule" id="MF_00624"/>
    </source>
</evidence>
<reference key="1">
    <citation type="submission" date="2006-09" db="EMBL/GenBank/DDBJ databases">
        <authorList>
            <consortium name="The Klebsiella pneumonia Genome Sequencing Project"/>
            <person name="McClelland M."/>
            <person name="Sanderson E.K."/>
            <person name="Spieth J."/>
            <person name="Clifton W.S."/>
            <person name="Latreille P."/>
            <person name="Sabo A."/>
            <person name="Pepin K."/>
            <person name="Bhonagiri V."/>
            <person name="Porwollik S."/>
            <person name="Ali J."/>
            <person name="Wilson R.K."/>
        </authorList>
    </citation>
    <scope>NUCLEOTIDE SEQUENCE [LARGE SCALE GENOMIC DNA]</scope>
    <source>
        <strain>ATCC 700721 / MGH 78578</strain>
    </source>
</reference>
<protein>
    <recommendedName>
        <fullName evidence="1">Glucose-1-phosphate adenylyltransferase</fullName>
        <ecNumber evidence="1">2.7.7.27</ecNumber>
    </recommendedName>
    <alternativeName>
        <fullName evidence="1">ADP-glucose pyrophosphorylase</fullName>
        <shortName evidence="1">ADPGlc PPase</shortName>
    </alternativeName>
    <alternativeName>
        <fullName evidence="1">ADP-glucose synthase</fullName>
    </alternativeName>
</protein>
<keyword id="KW-0021">Allosteric enzyme</keyword>
<keyword id="KW-0067">ATP-binding</keyword>
<keyword id="KW-0119">Carbohydrate metabolism</keyword>
<keyword id="KW-0320">Glycogen biosynthesis</keyword>
<keyword id="KW-0321">Glycogen metabolism</keyword>
<keyword id="KW-0547">Nucleotide-binding</keyword>
<keyword id="KW-0548">Nucleotidyltransferase</keyword>
<keyword id="KW-0808">Transferase</keyword>
<name>GLGC_KLEP7</name>
<feature type="chain" id="PRO_1000051570" description="Glucose-1-phosphate adenylyltransferase">
    <location>
        <begin position="1"/>
        <end position="431"/>
    </location>
</feature>
<feature type="binding site" evidence="1">
    <location>
        <position position="39"/>
    </location>
    <ligand>
        <name>beta-D-fructose 1,6-bisphosphate</name>
        <dbReference type="ChEBI" id="CHEBI:32966"/>
    </ligand>
</feature>
<feature type="binding site" evidence="1">
    <location>
        <position position="40"/>
    </location>
    <ligand>
        <name>AMP</name>
        <dbReference type="ChEBI" id="CHEBI:456215"/>
    </ligand>
</feature>
<feature type="binding site" evidence="1">
    <location>
        <position position="46"/>
    </location>
    <ligand>
        <name>AMP</name>
        <dbReference type="ChEBI" id="CHEBI:456215"/>
    </ligand>
</feature>
<feature type="binding site" evidence="1">
    <location>
        <position position="52"/>
    </location>
    <ligand>
        <name>AMP</name>
        <dbReference type="ChEBI" id="CHEBI:456215"/>
    </ligand>
</feature>
<feature type="binding site" evidence="1">
    <location>
        <position position="114"/>
    </location>
    <ligand>
        <name>alpha-D-glucose 1-phosphate</name>
        <dbReference type="ChEBI" id="CHEBI:58601"/>
    </ligand>
</feature>
<feature type="binding site" evidence="1">
    <location>
        <position position="130"/>
    </location>
    <ligand>
        <name>AMP</name>
        <dbReference type="ChEBI" id="CHEBI:456215"/>
    </ligand>
</feature>
<feature type="binding site" evidence="1">
    <location>
        <position position="179"/>
    </location>
    <ligand>
        <name>alpha-D-glucose 1-phosphate</name>
        <dbReference type="ChEBI" id="CHEBI:58601"/>
    </ligand>
</feature>
<feature type="binding site" evidence="1">
    <location>
        <begin position="194"/>
        <end position="195"/>
    </location>
    <ligand>
        <name>alpha-D-glucose 1-phosphate</name>
        <dbReference type="ChEBI" id="CHEBI:58601"/>
    </ligand>
</feature>
<feature type="binding site" evidence="1">
    <location>
        <position position="212"/>
    </location>
    <ligand>
        <name>alpha-D-glucose 1-phosphate</name>
        <dbReference type="ChEBI" id="CHEBI:58601"/>
    </ligand>
</feature>
<feature type="binding site" evidence="1">
    <location>
        <position position="386"/>
    </location>
    <ligand>
        <name>AMP</name>
        <dbReference type="ChEBI" id="CHEBI:456215"/>
    </ligand>
</feature>
<feature type="binding site" evidence="1">
    <location>
        <begin position="429"/>
        <end position="431"/>
    </location>
    <ligand>
        <name>beta-D-fructose 1,6-bisphosphate</name>
        <dbReference type="ChEBI" id="CHEBI:32966"/>
    </ligand>
</feature>
<feature type="site" description="Could play a key role in the communication between the regulatory and the substrate sites" evidence="1">
    <location>
        <position position="74"/>
    </location>
</feature>
<feature type="site" description="Could play a key role in the communication between the regulatory and the substrate sites" evidence="1">
    <location>
        <position position="113"/>
    </location>
</feature>
<gene>
    <name evidence="1" type="primary">glgC</name>
    <name type="ordered locus">KPN78578_37590</name>
    <name type="ORF">KPN_03796</name>
</gene>
<comment type="function">
    <text evidence="1">Involved in the biosynthesis of ADP-glucose, a building block required for the elongation reactions to produce glycogen. Catalyzes the reaction between ATP and alpha-D-glucose 1-phosphate (G1P) to produce pyrophosphate and ADP-Glc.</text>
</comment>
<comment type="catalytic activity">
    <reaction evidence="1">
        <text>alpha-D-glucose 1-phosphate + ATP + H(+) = ADP-alpha-D-glucose + diphosphate</text>
        <dbReference type="Rhea" id="RHEA:12120"/>
        <dbReference type="ChEBI" id="CHEBI:15378"/>
        <dbReference type="ChEBI" id="CHEBI:30616"/>
        <dbReference type="ChEBI" id="CHEBI:33019"/>
        <dbReference type="ChEBI" id="CHEBI:57498"/>
        <dbReference type="ChEBI" id="CHEBI:58601"/>
        <dbReference type="EC" id="2.7.7.27"/>
    </reaction>
</comment>
<comment type="activity regulation">
    <text evidence="1">Allosterically activated by fructose-1,6-bisphosphate (F16BP) and inhibited by AMP.</text>
</comment>
<comment type="pathway">
    <text evidence="1">Glycan biosynthesis; glycogen biosynthesis.</text>
</comment>
<comment type="subunit">
    <text evidence="1">Homotetramer.</text>
</comment>
<comment type="similarity">
    <text evidence="1">Belongs to the bacterial/plant glucose-1-phosphate adenylyltransferase family.</text>
</comment>
<accession>A6TF49</accession>